<feature type="chain" id="PRO_0000134878" description="Probable molybdenum cofactor guanylyltransferase">
    <location>
        <begin position="1"/>
        <end position="207"/>
    </location>
</feature>
<feature type="binding site" evidence="1">
    <location>
        <begin position="9"/>
        <end position="11"/>
    </location>
    <ligand>
        <name>GTP</name>
        <dbReference type="ChEBI" id="CHEBI:37565"/>
    </ligand>
</feature>
<feature type="binding site" evidence="1">
    <location>
        <position position="21"/>
    </location>
    <ligand>
        <name>GTP</name>
        <dbReference type="ChEBI" id="CHEBI:37565"/>
    </ligand>
</feature>
<feature type="binding site" evidence="1">
    <location>
        <position position="97"/>
    </location>
    <ligand>
        <name>GTP</name>
        <dbReference type="ChEBI" id="CHEBI:37565"/>
    </ligand>
</feature>
<feature type="binding site" evidence="1">
    <location>
        <position position="97"/>
    </location>
    <ligand>
        <name>Mg(2+)</name>
        <dbReference type="ChEBI" id="CHEBI:18420"/>
    </ligand>
</feature>
<evidence type="ECO:0000255" key="1">
    <source>
        <dbReference type="HAMAP-Rule" id="MF_00316"/>
    </source>
</evidence>
<organism>
    <name type="scientific">Nostoc sp. (strain PCC 7120 / SAG 25.82 / UTEX 2576)</name>
    <dbReference type="NCBI Taxonomy" id="103690"/>
    <lineage>
        <taxon>Bacteria</taxon>
        <taxon>Bacillati</taxon>
        <taxon>Cyanobacteriota</taxon>
        <taxon>Cyanophyceae</taxon>
        <taxon>Nostocales</taxon>
        <taxon>Nostocaceae</taxon>
        <taxon>Nostoc</taxon>
    </lineage>
</organism>
<name>MOBA_NOSS1</name>
<accession>Q8YY90</accession>
<keyword id="KW-0963">Cytoplasm</keyword>
<keyword id="KW-0342">GTP-binding</keyword>
<keyword id="KW-0460">Magnesium</keyword>
<keyword id="KW-0479">Metal-binding</keyword>
<keyword id="KW-0501">Molybdenum cofactor biosynthesis</keyword>
<keyword id="KW-0547">Nucleotide-binding</keyword>
<keyword id="KW-1185">Reference proteome</keyword>
<keyword id="KW-0808">Transferase</keyword>
<gene>
    <name evidence="1" type="primary">mobA</name>
    <name type="ordered locus">all0961</name>
</gene>
<dbReference type="EC" id="2.7.7.77" evidence="1"/>
<dbReference type="EMBL" id="BA000019">
    <property type="protein sequence ID" value="BAB72918.1"/>
    <property type="molecule type" value="Genomic_DNA"/>
</dbReference>
<dbReference type="PIR" id="AF1926">
    <property type="entry name" value="AF1926"/>
</dbReference>
<dbReference type="RefSeq" id="WP_010995135.1">
    <property type="nucleotide sequence ID" value="NZ_RSCN01000025.1"/>
</dbReference>
<dbReference type="SMR" id="Q8YY90"/>
<dbReference type="STRING" id="103690.gene:10492975"/>
<dbReference type="KEGG" id="ana:all0961"/>
<dbReference type="eggNOG" id="COG0746">
    <property type="taxonomic scope" value="Bacteria"/>
</dbReference>
<dbReference type="OrthoDB" id="9788394at2"/>
<dbReference type="Proteomes" id="UP000002483">
    <property type="component" value="Chromosome"/>
</dbReference>
<dbReference type="GO" id="GO:0005737">
    <property type="term" value="C:cytoplasm"/>
    <property type="evidence" value="ECO:0007669"/>
    <property type="project" value="UniProtKB-SubCell"/>
</dbReference>
<dbReference type="GO" id="GO:0005525">
    <property type="term" value="F:GTP binding"/>
    <property type="evidence" value="ECO:0007669"/>
    <property type="project" value="UniProtKB-UniRule"/>
</dbReference>
<dbReference type="GO" id="GO:0046872">
    <property type="term" value="F:metal ion binding"/>
    <property type="evidence" value="ECO:0007669"/>
    <property type="project" value="UniProtKB-KW"/>
</dbReference>
<dbReference type="GO" id="GO:0061603">
    <property type="term" value="F:molybdenum cofactor guanylyltransferase activity"/>
    <property type="evidence" value="ECO:0007669"/>
    <property type="project" value="UniProtKB-EC"/>
</dbReference>
<dbReference type="GO" id="GO:0006777">
    <property type="term" value="P:Mo-molybdopterin cofactor biosynthetic process"/>
    <property type="evidence" value="ECO:0007669"/>
    <property type="project" value="UniProtKB-KW"/>
</dbReference>
<dbReference type="CDD" id="cd02503">
    <property type="entry name" value="MobA"/>
    <property type="match status" value="1"/>
</dbReference>
<dbReference type="Gene3D" id="3.90.550.10">
    <property type="entry name" value="Spore Coat Polysaccharide Biosynthesis Protein SpsA, Chain A"/>
    <property type="match status" value="1"/>
</dbReference>
<dbReference type="HAMAP" id="MF_00316">
    <property type="entry name" value="MobA"/>
    <property type="match status" value="1"/>
</dbReference>
<dbReference type="InterPro" id="IPR025877">
    <property type="entry name" value="MobA-like_NTP_Trfase"/>
</dbReference>
<dbReference type="InterPro" id="IPR013482">
    <property type="entry name" value="Molybde_CF_guanTrfase"/>
</dbReference>
<dbReference type="InterPro" id="IPR029044">
    <property type="entry name" value="Nucleotide-diphossugar_trans"/>
</dbReference>
<dbReference type="NCBIfam" id="NF002741">
    <property type="entry name" value="PRK02726.1"/>
    <property type="match status" value="1"/>
</dbReference>
<dbReference type="PANTHER" id="PTHR19136">
    <property type="entry name" value="MOLYBDENUM COFACTOR GUANYLYLTRANSFERASE"/>
    <property type="match status" value="1"/>
</dbReference>
<dbReference type="PANTHER" id="PTHR19136:SF81">
    <property type="entry name" value="MOLYBDENUM COFACTOR GUANYLYLTRANSFERASE"/>
    <property type="match status" value="1"/>
</dbReference>
<dbReference type="Pfam" id="PF12804">
    <property type="entry name" value="NTP_transf_3"/>
    <property type="match status" value="1"/>
</dbReference>
<dbReference type="SUPFAM" id="SSF53448">
    <property type="entry name" value="Nucleotide-diphospho-sugar transferases"/>
    <property type="match status" value="1"/>
</dbReference>
<protein>
    <recommendedName>
        <fullName evidence="1">Probable molybdenum cofactor guanylyltransferase</fullName>
        <shortName evidence="1">MoCo guanylyltransferase</shortName>
        <ecNumber evidence="1">2.7.7.77</ecNumber>
    </recommendedName>
    <alternativeName>
        <fullName evidence="1">GTP:molybdopterin guanylyltransferase</fullName>
    </alternativeName>
    <alternativeName>
        <fullName evidence="1">Mo-MPT guanylyltransferase</fullName>
    </alternativeName>
    <alternativeName>
        <fullName evidence="1">Molybdopterin guanylyltransferase</fullName>
    </alternativeName>
    <alternativeName>
        <fullName evidence="1">Molybdopterin-guanine dinucleotide synthase</fullName>
        <shortName evidence="1">MGD synthase</shortName>
    </alternativeName>
</protein>
<sequence length="207" mass="22877">MNNLTAIVLAGGQSSRMGQDKALITVQGVPLLQFVCNIAASCADTVYIVTPWPERYEHLFLPGCKFLPEAATQGPLIGFAQGLAEVKSEWVLLLACDLPKLRVEVLQEWAANLDSVPEEAIAALPHHAKGWEPLCGFYRRRCLPQLLEFIHQGGRSFQQWLQHHSVQVLSLPTPEILFNCNTPEDLAVIQGEFDDLSPNPSPTRRGA</sequence>
<proteinExistence type="inferred from homology"/>
<comment type="function">
    <text evidence="1">Transfers a GMP moiety from GTP to Mo-molybdopterin (Mo-MPT) cofactor (Moco or molybdenum cofactor) to form Mo-molybdopterin guanine dinucleotide (Mo-MGD) cofactor.</text>
</comment>
<comment type="catalytic activity">
    <reaction evidence="1">
        <text>Mo-molybdopterin + GTP + H(+) = Mo-molybdopterin guanine dinucleotide + diphosphate</text>
        <dbReference type="Rhea" id="RHEA:34243"/>
        <dbReference type="ChEBI" id="CHEBI:15378"/>
        <dbReference type="ChEBI" id="CHEBI:33019"/>
        <dbReference type="ChEBI" id="CHEBI:37565"/>
        <dbReference type="ChEBI" id="CHEBI:71302"/>
        <dbReference type="ChEBI" id="CHEBI:71310"/>
        <dbReference type="EC" id="2.7.7.77"/>
    </reaction>
</comment>
<comment type="cofactor">
    <cofactor evidence="1">
        <name>Mg(2+)</name>
        <dbReference type="ChEBI" id="CHEBI:18420"/>
    </cofactor>
</comment>
<comment type="subcellular location">
    <subcellularLocation>
        <location evidence="1">Cytoplasm</location>
    </subcellularLocation>
</comment>
<comment type="domain">
    <text evidence="1">The N-terminal domain determines nucleotide recognition and specific binding, while the C-terminal domain determines the specific binding to the target protein.</text>
</comment>
<comment type="similarity">
    <text evidence="1">Belongs to the MobA family.</text>
</comment>
<reference key="1">
    <citation type="journal article" date="2001" name="DNA Res.">
        <title>Complete genomic sequence of the filamentous nitrogen-fixing cyanobacterium Anabaena sp. strain PCC 7120.</title>
        <authorList>
            <person name="Kaneko T."/>
            <person name="Nakamura Y."/>
            <person name="Wolk C.P."/>
            <person name="Kuritz T."/>
            <person name="Sasamoto S."/>
            <person name="Watanabe A."/>
            <person name="Iriguchi M."/>
            <person name="Ishikawa A."/>
            <person name="Kawashima K."/>
            <person name="Kimura T."/>
            <person name="Kishida Y."/>
            <person name="Kohara M."/>
            <person name="Matsumoto M."/>
            <person name="Matsuno A."/>
            <person name="Muraki A."/>
            <person name="Nakazaki N."/>
            <person name="Shimpo S."/>
            <person name="Sugimoto M."/>
            <person name="Takazawa M."/>
            <person name="Yamada M."/>
            <person name="Yasuda M."/>
            <person name="Tabata S."/>
        </authorList>
    </citation>
    <scope>NUCLEOTIDE SEQUENCE [LARGE SCALE GENOMIC DNA]</scope>
    <source>
        <strain>PCC 7120 / SAG 25.82 / UTEX 2576</strain>
    </source>
</reference>